<keyword id="KW-0002">3D-structure</keyword>
<keyword id="KW-0007">Acetylation</keyword>
<keyword id="KW-0053">Apoptosis</keyword>
<keyword id="KW-0903">Direct protein sequencing</keyword>
<keyword id="KW-0378">Hydrolase</keyword>
<keyword id="KW-0496">Mitochondrion</keyword>
<keyword id="KW-1185">Reference proteome</keyword>
<keyword id="KW-0687">Ribonucleoprotein</keyword>
<keyword id="KW-0689">Ribosomal protein</keyword>
<keyword id="KW-0809">Transit peptide</keyword>
<feature type="transit peptide" description="Mitochondrion" evidence="1">
    <location>
        <begin position="1"/>
        <end position="17"/>
    </location>
</feature>
<feature type="chain" id="PRO_0000087716" description="Small ribosomal subunit protein mS29">
    <location>
        <begin position="18"/>
        <end position="397"/>
    </location>
</feature>
<feature type="modified residue" description="N6-acetyllysine" evidence="2">
    <location>
        <position position="174"/>
    </location>
</feature>
<feature type="modified residue" description="N6-acetyllysine" evidence="2">
    <location>
        <position position="206"/>
    </location>
</feature>
<accession>P82922</accession>
<comment type="function">
    <text evidence="2">As a component of the mitochondrial small ribosomal subunit, it plays a role in the translation of mitochondrial mRNAs. Involved in mediating interferon-gamma-induced cell death. Displays GTPase activity in vitro.</text>
</comment>
<comment type="catalytic activity">
    <reaction evidence="2">
        <text>GTP + H2O = GDP + phosphate + H(+)</text>
        <dbReference type="Rhea" id="RHEA:19669"/>
        <dbReference type="ChEBI" id="CHEBI:15377"/>
        <dbReference type="ChEBI" id="CHEBI:15378"/>
        <dbReference type="ChEBI" id="CHEBI:37565"/>
        <dbReference type="ChEBI" id="CHEBI:43474"/>
        <dbReference type="ChEBI" id="CHEBI:58189"/>
    </reaction>
</comment>
<comment type="subunit">
    <text evidence="2 3">Component of the mitochondrial ribosome small subunit (28S) which comprises a 12S rRNA and about 30 distinct proteins (PubMed:11279123). Interacts with DELE1 (By similarity). Interacts with NOA1 (By similarity).</text>
</comment>
<comment type="subcellular location">
    <subcellularLocation>
        <location evidence="3">Mitochondrion</location>
    </subcellularLocation>
</comment>
<comment type="similarity">
    <text evidence="4">Belongs to the mitochondrion-specific ribosomal protein mS29 family.</text>
</comment>
<gene>
    <name evidence="2" type="primary">DAP3</name>
    <name evidence="2" type="synonym">MRPS29</name>
</gene>
<evidence type="ECO:0000250" key="1"/>
<evidence type="ECO:0000250" key="2">
    <source>
        <dbReference type="UniProtKB" id="P51398"/>
    </source>
</evidence>
<evidence type="ECO:0000269" key="3">
    <source>
    </source>
</evidence>
<evidence type="ECO:0000305" key="4"/>
<name>RT29_BOVIN</name>
<organism evidence="4">
    <name type="scientific">Bos taurus</name>
    <name type="common">Bovine</name>
    <dbReference type="NCBI Taxonomy" id="9913"/>
    <lineage>
        <taxon>Eukaryota</taxon>
        <taxon>Metazoa</taxon>
        <taxon>Chordata</taxon>
        <taxon>Craniata</taxon>
        <taxon>Vertebrata</taxon>
        <taxon>Euteleostomi</taxon>
        <taxon>Mammalia</taxon>
        <taxon>Eutheria</taxon>
        <taxon>Laurasiatheria</taxon>
        <taxon>Artiodactyla</taxon>
        <taxon>Ruminantia</taxon>
        <taxon>Pecora</taxon>
        <taxon>Bovidae</taxon>
        <taxon>Bovinae</taxon>
        <taxon>Bos</taxon>
    </lineage>
</organism>
<proteinExistence type="evidence at protein level"/>
<dbReference type="EC" id="3.6.5.-" evidence="2"/>
<dbReference type="RefSeq" id="XP_005203705.1">
    <property type="nucleotide sequence ID" value="XM_005203648.5"/>
</dbReference>
<dbReference type="PDB" id="3JD5">
    <property type="method" value="EM"/>
    <property type="resolution" value="7.00 A"/>
    <property type="chains" value="g=1-397"/>
</dbReference>
<dbReference type="PDBsum" id="3JD5"/>
<dbReference type="SMR" id="P82922"/>
<dbReference type="CORUM" id="P82922"/>
<dbReference type="FunCoup" id="P82922">
    <property type="interactions" value="3472"/>
</dbReference>
<dbReference type="IntAct" id="P82922">
    <property type="interactions" value="2"/>
</dbReference>
<dbReference type="STRING" id="9913.ENSBTAP00000001589"/>
<dbReference type="iPTMnet" id="P82922"/>
<dbReference type="PaxDb" id="9913-ENSBTAP00000001589"/>
<dbReference type="GeneID" id="504320"/>
<dbReference type="CTD" id="7818"/>
<dbReference type="eggNOG" id="KOG3928">
    <property type="taxonomic scope" value="Eukaryota"/>
</dbReference>
<dbReference type="HOGENOM" id="CLU_048181_0_0_1"/>
<dbReference type="InParanoid" id="P82922"/>
<dbReference type="OrthoDB" id="274828at2759"/>
<dbReference type="TreeFam" id="TF313726"/>
<dbReference type="Proteomes" id="UP000009136">
    <property type="component" value="Unplaced"/>
</dbReference>
<dbReference type="GO" id="GO:0005743">
    <property type="term" value="C:mitochondrial inner membrane"/>
    <property type="evidence" value="ECO:0000304"/>
    <property type="project" value="Reactome"/>
</dbReference>
<dbReference type="GO" id="GO:0005763">
    <property type="term" value="C:mitochondrial small ribosomal subunit"/>
    <property type="evidence" value="ECO:0000314"/>
    <property type="project" value="UniProtKB"/>
</dbReference>
<dbReference type="GO" id="GO:0005739">
    <property type="term" value="C:mitochondrion"/>
    <property type="evidence" value="ECO:0000250"/>
    <property type="project" value="UniProtKB"/>
</dbReference>
<dbReference type="GO" id="GO:0003735">
    <property type="term" value="F:structural constituent of ribosome"/>
    <property type="evidence" value="ECO:0007005"/>
    <property type="project" value="UniProtKB"/>
</dbReference>
<dbReference type="GO" id="GO:0006915">
    <property type="term" value="P:apoptotic process"/>
    <property type="evidence" value="ECO:0007669"/>
    <property type="project" value="UniProtKB-KW"/>
</dbReference>
<dbReference type="GO" id="GO:0032543">
    <property type="term" value="P:mitochondrial translation"/>
    <property type="evidence" value="ECO:0007005"/>
    <property type="project" value="UniProtKB"/>
</dbReference>
<dbReference type="InterPro" id="IPR027417">
    <property type="entry name" value="P-loop_NTPase"/>
</dbReference>
<dbReference type="InterPro" id="IPR019368">
    <property type="entry name" value="Ribosomal_mS29"/>
</dbReference>
<dbReference type="InterPro" id="IPR008092">
    <property type="entry name" value="Ribosomal_mS29_met"/>
</dbReference>
<dbReference type="PANTHER" id="PTHR12810">
    <property type="entry name" value="MITOCHONDRIAL 28S RIBOSOMAL PROTEIN S29"/>
    <property type="match status" value="1"/>
</dbReference>
<dbReference type="PANTHER" id="PTHR12810:SF0">
    <property type="entry name" value="SMALL RIBOSOMAL SUBUNIT PROTEIN MS29"/>
    <property type="match status" value="1"/>
</dbReference>
<dbReference type="Pfam" id="PF10236">
    <property type="entry name" value="DAP3"/>
    <property type="match status" value="1"/>
</dbReference>
<dbReference type="PRINTS" id="PR01716">
    <property type="entry name" value="DEATHASSOCP3"/>
</dbReference>
<dbReference type="SUPFAM" id="SSF52540">
    <property type="entry name" value="P-loop containing nucleoside triphosphate hydrolases"/>
    <property type="match status" value="1"/>
</dbReference>
<reference key="1">
    <citation type="journal article" date="2009" name="Science">
        <title>The genome sequence of taurine cattle: a window to ruminant biology and evolution.</title>
        <authorList>
            <consortium name="The bovine genome sequencing and analysis consortium"/>
        </authorList>
    </citation>
    <scope>NUCLEOTIDE SEQUENCE [LARGE SCALE GENOMIC DNA]</scope>
    <source>
        <strain>Hereford</strain>
    </source>
</reference>
<reference evidence="4" key="2">
    <citation type="journal article" date="2001" name="J. Biol. Chem.">
        <title>The small subunit of the mammalian mitochondrial ribosome: identification of the full complement of ribosomal proteins present.</title>
        <authorList>
            <person name="Koc E.C."/>
            <person name="Burkhart W."/>
            <person name="Blackburn K."/>
            <person name="Moseley A."/>
            <person name="Spremulli L.L."/>
        </authorList>
    </citation>
    <scope>PROTEIN SEQUENCE OF 58-91; 113-129; 147-162; 180-188; 279-290 AND 321-330</scope>
    <scope>IDENTIFICATION IN THE 28S MITOCHONDRIAL RIBOSOME</scope>
    <scope>SUBCELLULAR LOCATION</scope>
    <source>
        <tissue>Liver</tissue>
    </source>
</reference>
<sequence length="397" mass="45566">MLKGMTRLVSRVHKLDPGRFSHLGTQAPQCPVAHLDNQVPTERTRAISRTLENDPAKHGEQHVGQHYNISIQELKTVFPHGLPPRFVMQVKTFNEACLMVRKPALELLHYLKNTNFAHPAVRYVLYGEKGTGKTLSLCHIIHFCAKQDWLILHIPDAHLWVKNCRDLLQSTYNKQRFDQPLEASIWLKNFKTANERFLSQIKVQDKYVWNKRESTEKGSPLAEVVEQGIMRVRNATDAVGIVLKELKRQSSLGVFRLLVAVDGVNALWGRTTLKREDKSPITPEELALIYNLRKMVKNDWQGGAIVLTVSQTGSLFKPRKAYLPQELLGKEGFDTLDPFIPILVSNYNPKEFEGCIQYYLENNWLQHEKAHTEEGKKELLFLSNRNPGLLERLCAYL</sequence>
<protein>
    <recommendedName>
        <fullName evidence="4">Small ribosomal subunit protein mS29</fullName>
        <ecNumber evidence="2">3.6.5.-</ecNumber>
    </recommendedName>
    <alternativeName>
        <fullName>28S ribosomal protein S29, mitochondrial</fullName>
        <shortName>MRP-S29</shortName>
        <shortName>S29mt</shortName>
    </alternativeName>
    <alternativeName>
        <fullName evidence="2">Death-associated protein 3</fullName>
        <shortName>DAP-3</shortName>
    </alternativeName>
</protein>